<comment type="function">
    <text>Regulates the adhesive and proliferative status of intestinal epithelial cells. Can mediate density-dependent cell proliferation.</text>
</comment>
<comment type="subcellular location">
    <subcellularLocation>
        <location>Membrane</location>
        <topology>Multi-pass membrane protein</topology>
    </subcellularLocation>
</comment>
<comment type="similarity">
    <text evidence="2">Belongs to the L6 tetraspanin family.</text>
</comment>
<name>T4S4_PONAB</name>
<protein>
    <recommendedName>
        <fullName>Transmembrane 4 L6 family member 4</fullName>
    </recommendedName>
</protein>
<sequence length="202" mass="21396">MCTGGCARCLGGTLIPLAFFGFLANILLFFPGGKVIDDNDHLSQEIWFFGGILGSGVLMIFPALVFLGLKNNDCCGCCGNEGCGKRFAMFTSTIFAVVGFLGAGYSFIISAISINKGPKCLMANSTWGYPFHDGDYLNDEALWNKCREPLNVVPWNLTLFSILLVVGGIQMVLCAIQVVNGLLGTLCGDCQCCGCCGGDGPV</sequence>
<gene>
    <name type="primary">TM4SF4</name>
</gene>
<organism>
    <name type="scientific">Pongo abelii</name>
    <name type="common">Sumatran orangutan</name>
    <name type="synonym">Pongo pygmaeus abelii</name>
    <dbReference type="NCBI Taxonomy" id="9601"/>
    <lineage>
        <taxon>Eukaryota</taxon>
        <taxon>Metazoa</taxon>
        <taxon>Chordata</taxon>
        <taxon>Craniata</taxon>
        <taxon>Vertebrata</taxon>
        <taxon>Euteleostomi</taxon>
        <taxon>Mammalia</taxon>
        <taxon>Eutheria</taxon>
        <taxon>Euarchontoglires</taxon>
        <taxon>Primates</taxon>
        <taxon>Haplorrhini</taxon>
        <taxon>Catarrhini</taxon>
        <taxon>Hominidae</taxon>
        <taxon>Pongo</taxon>
    </lineage>
</organism>
<proteinExistence type="evidence at transcript level"/>
<evidence type="ECO:0000255" key="1"/>
<evidence type="ECO:0000305" key="2"/>
<accession>Q5R6Z4</accession>
<feature type="chain" id="PRO_0000219301" description="Transmembrane 4 L6 family member 4">
    <location>
        <begin position="1"/>
        <end position="202"/>
    </location>
</feature>
<feature type="topological domain" description="Cytoplasmic" evidence="1">
    <location>
        <begin position="1"/>
        <end position="9"/>
    </location>
</feature>
<feature type="transmembrane region" description="Helical" evidence="1">
    <location>
        <begin position="10"/>
        <end position="30"/>
    </location>
</feature>
<feature type="topological domain" description="Extracellular" evidence="1">
    <location>
        <begin position="31"/>
        <end position="45"/>
    </location>
</feature>
<feature type="transmembrane region" description="Helical" evidence="1">
    <location>
        <begin position="46"/>
        <end position="66"/>
    </location>
</feature>
<feature type="topological domain" description="Cytoplasmic" evidence="1">
    <location>
        <begin position="67"/>
        <end position="93"/>
    </location>
</feature>
<feature type="transmembrane region" description="Helical" evidence="1">
    <location>
        <begin position="94"/>
        <end position="114"/>
    </location>
</feature>
<feature type="topological domain" description="Extracellular" evidence="1">
    <location>
        <begin position="115"/>
        <end position="158"/>
    </location>
</feature>
<feature type="transmembrane region" description="Helical" evidence="1">
    <location>
        <begin position="159"/>
        <end position="179"/>
    </location>
</feature>
<feature type="topological domain" description="Cytoplasmic" evidence="1">
    <location>
        <begin position="180"/>
        <end position="202"/>
    </location>
</feature>
<feature type="glycosylation site" description="N-linked (GlcNAc...) asparagine" evidence="1">
    <location>
        <position position="156"/>
    </location>
</feature>
<dbReference type="EMBL" id="CR860329">
    <property type="protein sequence ID" value="CAH92466.1"/>
    <property type="molecule type" value="mRNA"/>
</dbReference>
<dbReference type="RefSeq" id="NP_001129016.1">
    <property type="nucleotide sequence ID" value="NM_001135544.1"/>
</dbReference>
<dbReference type="FunCoup" id="Q5R6Z4">
    <property type="interactions" value="22"/>
</dbReference>
<dbReference type="STRING" id="9601.ENSPPYP00000015878"/>
<dbReference type="GlyCosmos" id="Q5R6Z4">
    <property type="glycosylation" value="1 site, No reported glycans"/>
</dbReference>
<dbReference type="GeneID" id="100190857"/>
<dbReference type="CTD" id="7104"/>
<dbReference type="eggNOG" id="ENOG502QVGK">
    <property type="taxonomic scope" value="Eukaryota"/>
</dbReference>
<dbReference type="InParanoid" id="Q5R6Z4"/>
<dbReference type="OrthoDB" id="9449742at2759"/>
<dbReference type="Proteomes" id="UP000001595">
    <property type="component" value="Unplaced"/>
</dbReference>
<dbReference type="GO" id="GO:0016020">
    <property type="term" value="C:membrane"/>
    <property type="evidence" value="ECO:0007669"/>
    <property type="project" value="UniProtKB-SubCell"/>
</dbReference>
<dbReference type="InterPro" id="IPR008661">
    <property type="entry name" value="L6_membrane"/>
</dbReference>
<dbReference type="PANTHER" id="PTHR14198">
    <property type="entry name" value="TRANSMEMBRANE 4 L6 FAMILY MEMBER 1-RELATED"/>
    <property type="match status" value="1"/>
</dbReference>
<dbReference type="PANTHER" id="PTHR14198:SF15">
    <property type="entry name" value="TRANSMEMBRANE 4 L6 FAMILY MEMBER 4"/>
    <property type="match status" value="1"/>
</dbReference>
<dbReference type="Pfam" id="PF05805">
    <property type="entry name" value="L6_membrane"/>
    <property type="match status" value="1"/>
</dbReference>
<reference key="1">
    <citation type="submission" date="2004-11" db="EMBL/GenBank/DDBJ databases">
        <authorList>
            <consortium name="The German cDNA consortium"/>
        </authorList>
    </citation>
    <scope>NUCLEOTIDE SEQUENCE [LARGE SCALE MRNA]</scope>
    <source>
        <tissue>Brain cortex</tissue>
    </source>
</reference>
<keyword id="KW-0325">Glycoprotein</keyword>
<keyword id="KW-0472">Membrane</keyword>
<keyword id="KW-1185">Reference proteome</keyword>
<keyword id="KW-0812">Transmembrane</keyword>
<keyword id="KW-1133">Transmembrane helix</keyword>